<comment type="function">
    <text evidence="1">Negatively regulates transcription of bacterial ribonucleotide reductase nrd genes and operons by binding to NrdR-boxes.</text>
</comment>
<comment type="cofactor">
    <cofactor evidence="1">
        <name>Zn(2+)</name>
        <dbReference type="ChEBI" id="CHEBI:29105"/>
    </cofactor>
    <text evidence="1">Binds 1 zinc ion.</text>
</comment>
<comment type="similarity">
    <text evidence="1">Belongs to the NrdR family.</text>
</comment>
<protein>
    <recommendedName>
        <fullName evidence="1">Transcriptional repressor NrdR</fullName>
    </recommendedName>
</protein>
<organism>
    <name type="scientific">Aliivibrio fischeri (strain ATCC 700601 / ES114)</name>
    <name type="common">Vibrio fischeri</name>
    <dbReference type="NCBI Taxonomy" id="312309"/>
    <lineage>
        <taxon>Bacteria</taxon>
        <taxon>Pseudomonadati</taxon>
        <taxon>Pseudomonadota</taxon>
        <taxon>Gammaproteobacteria</taxon>
        <taxon>Vibrionales</taxon>
        <taxon>Vibrionaceae</taxon>
        <taxon>Aliivibrio</taxon>
    </lineage>
</organism>
<keyword id="KW-0067">ATP-binding</keyword>
<keyword id="KW-0238">DNA-binding</keyword>
<keyword id="KW-0479">Metal-binding</keyword>
<keyword id="KW-0547">Nucleotide-binding</keyword>
<keyword id="KW-1185">Reference proteome</keyword>
<keyword id="KW-0678">Repressor</keyword>
<keyword id="KW-0804">Transcription</keyword>
<keyword id="KW-0805">Transcription regulation</keyword>
<keyword id="KW-0862">Zinc</keyword>
<keyword id="KW-0863">Zinc-finger</keyword>
<proteinExistence type="inferred from homology"/>
<reference key="1">
    <citation type="journal article" date="2005" name="Proc. Natl. Acad. Sci. U.S.A.">
        <title>Complete genome sequence of Vibrio fischeri: a symbiotic bacterium with pathogenic congeners.</title>
        <authorList>
            <person name="Ruby E.G."/>
            <person name="Urbanowski M."/>
            <person name="Campbell J."/>
            <person name="Dunn A."/>
            <person name="Faini M."/>
            <person name="Gunsalus R."/>
            <person name="Lostroh P."/>
            <person name="Lupp C."/>
            <person name="McCann J."/>
            <person name="Millikan D."/>
            <person name="Schaefer A."/>
            <person name="Stabb E."/>
            <person name="Stevens A."/>
            <person name="Visick K."/>
            <person name="Whistler C."/>
            <person name="Greenberg E.P."/>
        </authorList>
    </citation>
    <scope>NUCLEOTIDE SEQUENCE [LARGE SCALE GENOMIC DNA]</scope>
    <source>
        <strain>ATCC 700601 / ES114</strain>
    </source>
</reference>
<dbReference type="EMBL" id="CP000020">
    <property type="protein sequence ID" value="AAW85194.1"/>
    <property type="molecule type" value="Genomic_DNA"/>
</dbReference>
<dbReference type="RefSeq" id="WP_005418088.1">
    <property type="nucleotide sequence ID" value="NZ_CAWLES010000001.1"/>
</dbReference>
<dbReference type="RefSeq" id="YP_204082.1">
    <property type="nucleotide sequence ID" value="NC_006840.2"/>
</dbReference>
<dbReference type="SMR" id="Q5E702"/>
<dbReference type="STRING" id="312309.VF_0699"/>
<dbReference type="EnsemblBacteria" id="AAW85194">
    <property type="protein sequence ID" value="AAW85194"/>
    <property type="gene ID" value="VF_0699"/>
</dbReference>
<dbReference type="GeneID" id="54163354"/>
<dbReference type="KEGG" id="vfi:VF_0699"/>
<dbReference type="PATRIC" id="fig|312309.11.peg.693"/>
<dbReference type="eggNOG" id="COG1327">
    <property type="taxonomic scope" value="Bacteria"/>
</dbReference>
<dbReference type="HOGENOM" id="CLU_108412_0_0_6"/>
<dbReference type="OrthoDB" id="9807461at2"/>
<dbReference type="Proteomes" id="UP000000537">
    <property type="component" value="Chromosome I"/>
</dbReference>
<dbReference type="GO" id="GO:0005524">
    <property type="term" value="F:ATP binding"/>
    <property type="evidence" value="ECO:0007669"/>
    <property type="project" value="UniProtKB-KW"/>
</dbReference>
<dbReference type="GO" id="GO:0003677">
    <property type="term" value="F:DNA binding"/>
    <property type="evidence" value="ECO:0007669"/>
    <property type="project" value="UniProtKB-KW"/>
</dbReference>
<dbReference type="GO" id="GO:0008270">
    <property type="term" value="F:zinc ion binding"/>
    <property type="evidence" value="ECO:0007669"/>
    <property type="project" value="UniProtKB-UniRule"/>
</dbReference>
<dbReference type="GO" id="GO:0045892">
    <property type="term" value="P:negative regulation of DNA-templated transcription"/>
    <property type="evidence" value="ECO:0007669"/>
    <property type="project" value="UniProtKB-UniRule"/>
</dbReference>
<dbReference type="HAMAP" id="MF_00440">
    <property type="entry name" value="NrdR"/>
    <property type="match status" value="1"/>
</dbReference>
<dbReference type="InterPro" id="IPR005144">
    <property type="entry name" value="ATP-cone_dom"/>
</dbReference>
<dbReference type="InterPro" id="IPR055173">
    <property type="entry name" value="NrdR-like_N"/>
</dbReference>
<dbReference type="InterPro" id="IPR003796">
    <property type="entry name" value="RNR_NrdR-like"/>
</dbReference>
<dbReference type="NCBIfam" id="TIGR00244">
    <property type="entry name" value="transcriptional regulator NrdR"/>
    <property type="match status" value="1"/>
</dbReference>
<dbReference type="PANTHER" id="PTHR30455">
    <property type="entry name" value="TRANSCRIPTIONAL REPRESSOR NRDR"/>
    <property type="match status" value="1"/>
</dbReference>
<dbReference type="PANTHER" id="PTHR30455:SF2">
    <property type="entry name" value="TRANSCRIPTIONAL REPRESSOR NRDR"/>
    <property type="match status" value="1"/>
</dbReference>
<dbReference type="Pfam" id="PF03477">
    <property type="entry name" value="ATP-cone"/>
    <property type="match status" value="1"/>
</dbReference>
<dbReference type="Pfam" id="PF22811">
    <property type="entry name" value="Zn_ribbon_NrdR"/>
    <property type="match status" value="1"/>
</dbReference>
<dbReference type="PROSITE" id="PS51161">
    <property type="entry name" value="ATP_CONE"/>
    <property type="match status" value="1"/>
</dbReference>
<feature type="chain" id="PRO_0000230906" description="Transcriptional repressor NrdR">
    <location>
        <begin position="1"/>
        <end position="149"/>
    </location>
</feature>
<feature type="domain" description="ATP-cone" evidence="1">
    <location>
        <begin position="49"/>
        <end position="139"/>
    </location>
</feature>
<feature type="zinc finger region" evidence="1">
    <location>
        <begin position="3"/>
        <end position="34"/>
    </location>
</feature>
<gene>
    <name evidence="1" type="primary">nrdR</name>
    <name type="ordered locus">VF_0699</name>
</gene>
<sequence>MHCPFCSATDTKVIDSRLVSDGHQVRRRRQCLACSERFTTFESAELVMPKVIKSNGNREPFDEDKLSGGLYRSLEKRPVSADLVELALNTIKSQLRATGEREVPSDMIGNLVMDQLKELDKVAYIRFASVYRSFEDIKEFGEEIAKLEK</sequence>
<evidence type="ECO:0000255" key="1">
    <source>
        <dbReference type="HAMAP-Rule" id="MF_00440"/>
    </source>
</evidence>
<name>NRDR_ALIF1</name>
<accession>Q5E702</accession>